<protein>
    <recommendedName>
        <fullName>Quinone oxidoreductase-like protein 1</fullName>
        <ecNumber>1.-.-.-</ecNumber>
    </recommendedName>
    <alternativeName>
        <fullName>Ferry endosomal RAB5 effector complex subunit 4</fullName>
        <shortName evidence="4">Fy-4</shortName>
    </alternativeName>
    <alternativeName>
        <fullName>Protein 4P11</fullName>
    </alternativeName>
    <alternativeName>
        <fullName>Quinone oxidoreductase homolog 1</fullName>
        <shortName>QOH-1</shortName>
    </alternativeName>
    <alternativeName>
        <fullName>Zeta-crystallin homolog</fullName>
    </alternativeName>
</protein>
<evidence type="ECO:0000269" key="1">
    <source>
    </source>
</evidence>
<evidence type="ECO:0000269" key="2">
    <source>
    </source>
</evidence>
<evidence type="ECO:0000303" key="3">
    <source>
    </source>
</evidence>
<evidence type="ECO:0000303" key="4">
    <source>
    </source>
</evidence>
<evidence type="ECO:0000305" key="5"/>
<evidence type="ECO:0007744" key="6">
    <source>
        <dbReference type="PDB" id="7ND2"/>
    </source>
</evidence>
<evidence type="ECO:0007744" key="7">
    <source>
        <dbReference type="PDB" id="8A3O"/>
    </source>
</evidence>
<evidence type="ECO:0007829" key="8">
    <source>
        <dbReference type="PDB" id="8A3O"/>
    </source>
</evidence>
<comment type="function">
    <text evidence="1 2">Component of the FERRY complex (Five-subunit Endosomal Rab5 and RNA/ribosome intermediary) (PubMed:37267905, PubMed:37267906). The FERRY complex directly interacts with mRNAs and RAB5A, and functions as a RAB5A effector involved in the localization and the distribution of specific mRNAs most likely by mediating their endosomal transport. The complex recruits mRNAs and ribosomes to early endosomes through direct mRNA-interaction (PubMed:37267905).</text>
</comment>
<comment type="subunit">
    <text evidence="1 2">Homodimer (PubMed:37267906). Component of the FERRY complex composed of five subunits, TBCK, PPP1R21, FERRY3, CRYZL1 and GATD1 with a ratio of 1:2:1:2:4, respectively (PubMed:37267905, PubMed:37267906).</text>
</comment>
<comment type="interaction">
    <interactant intactId="EBI-11023114">
        <id>O95825</id>
    </interactant>
    <interactant intactId="EBI-751027">
        <id>Q13572</id>
        <label>ITPK1</label>
    </interactant>
    <organismsDiffer>false</organismsDiffer>
    <experiments>2</experiments>
</comment>
<comment type="interaction">
    <interactant intactId="EBI-11023114">
        <id>O95825</id>
    </interactant>
    <interactant intactId="EBI-5235703">
        <id>Q6ZMI0</id>
        <label>PPP1R21</label>
    </interactant>
    <organismsDiffer>false</organismsDiffer>
    <experiments>2</experiments>
</comment>
<comment type="subcellular location">
    <subcellularLocation>
        <location evidence="1">Early endosome</location>
    </subcellularLocation>
</comment>
<comment type="alternative products">
    <event type="alternative splicing"/>
    <isoform>
        <id>O95825-1</id>
        <name>1</name>
        <sequence type="displayed"/>
    </isoform>
    <isoform>
        <id>O95825-2</id>
        <name>2</name>
        <sequence type="described" ref="VSP_055792 VSP_055793"/>
    </isoform>
</comment>
<comment type="tissue specificity">
    <text>Ubiquitous.</text>
</comment>
<comment type="similarity">
    <text evidence="5">Belongs to the zinc-containing alcohol dehydrogenase family. Quinone oxidoreductase subfamily.</text>
</comment>
<comment type="sequence caution" evidence="5">
    <conflict type="miscellaneous discrepancy">
        <sequence resource="EMBL-CDS" id="AAH13155"/>
    </conflict>
</comment>
<comment type="sequence caution" evidence="5">
    <conflict type="frameshift">
        <sequence resource="EMBL-CDS" id="BAA91605"/>
    </conflict>
</comment>
<reference key="1">
    <citation type="journal article" date="1998" name="Eur. Cytokine Netw.">
        <title>Identification of a novel gene, 4P11, which maps to the D142H8 region of chromosome 21q22.1 and is closely linked to the IFN-gamma receptor-2 (AF-1) gene.</title>
        <authorList>
            <person name="Cook J.R."/>
            <person name="Bradshaw G."/>
            <person name="Donnelly R.J."/>
            <person name="Soh J."/>
            <person name="Pestka S."/>
        </authorList>
    </citation>
    <scope>NUCLEOTIDE SEQUENCE [MRNA] (ISOFORM 1)</scope>
</reference>
<reference key="2">
    <citation type="journal article" date="1999" name="Genomics">
        <title>Identification of a zeta-crystallin (quinone reductase)-like 1 gene (CRYZL1) mapped to human chromosome 21q22.1.</title>
        <authorList>
            <person name="Kim M.-Y."/>
            <person name="Lee H.-K."/>
            <person name="Park J.-S."/>
            <person name="Park S.-H."/>
            <person name="Kwon H.-B."/>
            <person name="Soh J."/>
        </authorList>
    </citation>
    <scope>NUCLEOTIDE SEQUENCE [MRNA] (ISOFORM 1)</scope>
    <source>
        <tissue>Brain</tissue>
    </source>
</reference>
<reference key="3">
    <citation type="journal article" date="2004" name="Nat. Genet.">
        <title>Complete sequencing and characterization of 21,243 full-length human cDNAs.</title>
        <authorList>
            <person name="Ota T."/>
            <person name="Suzuki Y."/>
            <person name="Nishikawa T."/>
            <person name="Otsuki T."/>
            <person name="Sugiyama T."/>
            <person name="Irie R."/>
            <person name="Wakamatsu A."/>
            <person name="Hayashi K."/>
            <person name="Sato H."/>
            <person name="Nagai K."/>
            <person name="Kimura K."/>
            <person name="Makita H."/>
            <person name="Sekine M."/>
            <person name="Obayashi M."/>
            <person name="Nishi T."/>
            <person name="Shibahara T."/>
            <person name="Tanaka T."/>
            <person name="Ishii S."/>
            <person name="Yamamoto J."/>
            <person name="Saito K."/>
            <person name="Kawai Y."/>
            <person name="Isono Y."/>
            <person name="Nakamura Y."/>
            <person name="Nagahari K."/>
            <person name="Murakami K."/>
            <person name="Yasuda T."/>
            <person name="Iwayanagi T."/>
            <person name="Wagatsuma M."/>
            <person name="Shiratori A."/>
            <person name="Sudo H."/>
            <person name="Hosoiri T."/>
            <person name="Kaku Y."/>
            <person name="Kodaira H."/>
            <person name="Kondo H."/>
            <person name="Sugawara M."/>
            <person name="Takahashi M."/>
            <person name="Kanda K."/>
            <person name="Yokoi T."/>
            <person name="Furuya T."/>
            <person name="Kikkawa E."/>
            <person name="Omura Y."/>
            <person name="Abe K."/>
            <person name="Kamihara K."/>
            <person name="Katsuta N."/>
            <person name="Sato K."/>
            <person name="Tanikawa M."/>
            <person name="Yamazaki M."/>
            <person name="Ninomiya K."/>
            <person name="Ishibashi T."/>
            <person name="Yamashita H."/>
            <person name="Murakawa K."/>
            <person name="Fujimori K."/>
            <person name="Tanai H."/>
            <person name="Kimata M."/>
            <person name="Watanabe M."/>
            <person name="Hiraoka S."/>
            <person name="Chiba Y."/>
            <person name="Ishida S."/>
            <person name="Ono Y."/>
            <person name="Takiguchi S."/>
            <person name="Watanabe S."/>
            <person name="Yosida M."/>
            <person name="Hotuta T."/>
            <person name="Kusano J."/>
            <person name="Kanehori K."/>
            <person name="Takahashi-Fujii A."/>
            <person name="Hara H."/>
            <person name="Tanase T.-O."/>
            <person name="Nomura Y."/>
            <person name="Togiya S."/>
            <person name="Komai F."/>
            <person name="Hara R."/>
            <person name="Takeuchi K."/>
            <person name="Arita M."/>
            <person name="Imose N."/>
            <person name="Musashino K."/>
            <person name="Yuuki H."/>
            <person name="Oshima A."/>
            <person name="Sasaki N."/>
            <person name="Aotsuka S."/>
            <person name="Yoshikawa Y."/>
            <person name="Matsunawa H."/>
            <person name="Ichihara T."/>
            <person name="Shiohata N."/>
            <person name="Sano S."/>
            <person name="Moriya S."/>
            <person name="Momiyama H."/>
            <person name="Satoh N."/>
            <person name="Takami S."/>
            <person name="Terashima Y."/>
            <person name="Suzuki O."/>
            <person name="Nakagawa S."/>
            <person name="Senoh A."/>
            <person name="Mizoguchi H."/>
            <person name="Goto Y."/>
            <person name="Shimizu F."/>
            <person name="Wakebe H."/>
            <person name="Hishigaki H."/>
            <person name="Watanabe T."/>
            <person name="Sugiyama A."/>
            <person name="Takemoto M."/>
            <person name="Kawakami B."/>
            <person name="Yamazaki M."/>
            <person name="Watanabe K."/>
            <person name="Kumagai A."/>
            <person name="Itakura S."/>
            <person name="Fukuzumi Y."/>
            <person name="Fujimori Y."/>
            <person name="Komiyama M."/>
            <person name="Tashiro H."/>
            <person name="Tanigami A."/>
            <person name="Fujiwara T."/>
            <person name="Ono T."/>
            <person name="Yamada K."/>
            <person name="Fujii Y."/>
            <person name="Ozaki K."/>
            <person name="Hirao M."/>
            <person name="Ohmori Y."/>
            <person name="Kawabata A."/>
            <person name="Hikiji T."/>
            <person name="Kobatake N."/>
            <person name="Inagaki H."/>
            <person name="Ikema Y."/>
            <person name="Okamoto S."/>
            <person name="Okitani R."/>
            <person name="Kawakami T."/>
            <person name="Noguchi S."/>
            <person name="Itoh T."/>
            <person name="Shigeta K."/>
            <person name="Senba T."/>
            <person name="Matsumura K."/>
            <person name="Nakajima Y."/>
            <person name="Mizuno T."/>
            <person name="Morinaga M."/>
            <person name="Sasaki M."/>
            <person name="Togashi T."/>
            <person name="Oyama M."/>
            <person name="Hata H."/>
            <person name="Watanabe M."/>
            <person name="Komatsu T."/>
            <person name="Mizushima-Sugano J."/>
            <person name="Satoh T."/>
            <person name="Shirai Y."/>
            <person name="Takahashi Y."/>
            <person name="Nakagawa K."/>
            <person name="Okumura K."/>
            <person name="Nagase T."/>
            <person name="Nomura N."/>
            <person name="Kikuchi H."/>
            <person name="Masuho Y."/>
            <person name="Yamashita R."/>
            <person name="Nakai K."/>
            <person name="Yada T."/>
            <person name="Nakamura Y."/>
            <person name="Ohara O."/>
            <person name="Isogai T."/>
            <person name="Sugano S."/>
        </authorList>
    </citation>
    <scope>NUCLEOTIDE SEQUENCE [LARGE SCALE MRNA] (ISOFORMS 1 AND 2)</scope>
    <source>
        <tissue>Testis</tissue>
        <tissue>Thymus</tissue>
    </source>
</reference>
<reference key="4">
    <citation type="journal article" date="2000" name="Nature">
        <title>The DNA sequence of human chromosome 21.</title>
        <authorList>
            <person name="Hattori M."/>
            <person name="Fujiyama A."/>
            <person name="Taylor T.D."/>
            <person name="Watanabe H."/>
            <person name="Yada T."/>
            <person name="Park H.-S."/>
            <person name="Toyoda A."/>
            <person name="Ishii K."/>
            <person name="Totoki Y."/>
            <person name="Choi D.-K."/>
            <person name="Groner Y."/>
            <person name="Soeda E."/>
            <person name="Ohki M."/>
            <person name="Takagi T."/>
            <person name="Sakaki Y."/>
            <person name="Taudien S."/>
            <person name="Blechschmidt K."/>
            <person name="Polley A."/>
            <person name="Menzel U."/>
            <person name="Delabar J."/>
            <person name="Kumpf K."/>
            <person name="Lehmann R."/>
            <person name="Patterson D."/>
            <person name="Reichwald K."/>
            <person name="Rump A."/>
            <person name="Schillhabel M."/>
            <person name="Schudy A."/>
            <person name="Zimmermann W."/>
            <person name="Rosenthal A."/>
            <person name="Kudoh J."/>
            <person name="Shibuya K."/>
            <person name="Kawasaki K."/>
            <person name="Asakawa S."/>
            <person name="Shintani A."/>
            <person name="Sasaki T."/>
            <person name="Nagamine K."/>
            <person name="Mitsuyama S."/>
            <person name="Antonarakis S.E."/>
            <person name="Minoshima S."/>
            <person name="Shimizu N."/>
            <person name="Nordsiek G."/>
            <person name="Hornischer K."/>
            <person name="Brandt P."/>
            <person name="Scharfe M."/>
            <person name="Schoen O."/>
            <person name="Desario A."/>
            <person name="Reichelt J."/>
            <person name="Kauer G."/>
            <person name="Bloecker H."/>
            <person name="Ramser J."/>
            <person name="Beck A."/>
            <person name="Klages S."/>
            <person name="Hennig S."/>
            <person name="Riesselmann L."/>
            <person name="Dagand E."/>
            <person name="Wehrmeyer S."/>
            <person name="Borzym K."/>
            <person name="Gardiner K."/>
            <person name="Nizetic D."/>
            <person name="Francis F."/>
            <person name="Lehrach H."/>
            <person name="Reinhardt R."/>
            <person name="Yaspo M.-L."/>
        </authorList>
    </citation>
    <scope>NUCLEOTIDE SEQUENCE [LARGE SCALE GENOMIC DNA]</scope>
</reference>
<reference key="5">
    <citation type="journal article" date="2004" name="Genome Res.">
        <title>The status, quality, and expansion of the NIH full-length cDNA project: the Mammalian Gene Collection (MGC).</title>
        <authorList>
            <consortium name="The MGC Project Team"/>
        </authorList>
    </citation>
    <scope>NUCLEOTIDE SEQUENCE [LARGE SCALE MRNA] (ISOFORM 1)</scope>
    <source>
        <tissue>Eye</tissue>
        <tissue>Testis</tissue>
    </source>
</reference>
<reference key="6">
    <citation type="journal article" date="2011" name="BMC Syst. Biol.">
        <title>Initial characterization of the human central proteome.</title>
        <authorList>
            <person name="Burkard T.R."/>
            <person name="Planyavsky M."/>
            <person name="Kaupe I."/>
            <person name="Breitwieser F.P."/>
            <person name="Buerckstuemmer T."/>
            <person name="Bennett K.L."/>
            <person name="Superti-Furga G."/>
            <person name="Colinge J."/>
        </authorList>
    </citation>
    <scope>IDENTIFICATION BY MASS SPECTROMETRY [LARGE SCALE ANALYSIS]</scope>
</reference>
<reference key="7">
    <citation type="journal article" date="2023" name="Mol. Cell">
        <title>The Rab5 effector FERRY links early endosomes with mRNA localization.</title>
        <authorList>
            <person name="Schuhmacher J.S."/>
            <person name="Tom Dieck S."/>
            <person name="Christoforidis S."/>
            <person name="Landerer C."/>
            <person name="Davila Gallesio J."/>
            <person name="Hersemann L."/>
            <person name="Seifert S."/>
            <person name="Schaefer R."/>
            <person name="Giner A."/>
            <person name="Toth-Petroczy A."/>
            <person name="Kalaidzidis Y."/>
            <person name="Bohnsack K.E."/>
            <person name="Bohnsack M.T."/>
            <person name="Schuman E.M."/>
            <person name="Zerial M."/>
        </authorList>
    </citation>
    <scope>SUBUNIT</scope>
    <scope>IDENTIFICATION OF THE FERRY COMPLEX</scope>
    <scope>FUNCTION</scope>
    <scope>SUBCELLULAR LOCATION</scope>
</reference>
<reference evidence="6 7" key="8">
    <citation type="journal article" date="2023" name="Mol. Cell">
        <title>Structural basis of mRNA binding by the human FERRY Rab5 effector complex.</title>
        <authorList>
            <person name="Quentin D."/>
            <person name="Schuhmacher J.S."/>
            <person name="Klink B.U."/>
            <person name="Lauer J."/>
            <person name="Shaikh T.R."/>
            <person name="Huis In 't Veld P.J."/>
            <person name="Welp L.M."/>
            <person name="Urlaub H."/>
            <person name="Zerial M."/>
            <person name="Raunser S."/>
        </authorList>
    </citation>
    <scope>X-RAY CRYSTALLOGRAPHY (2.90 ANGSTROMS) OF 2-349 IN FERRY COMPLEX</scope>
    <scope>SUBUNIT</scope>
</reference>
<accession>O95825</accession>
<accession>B2RDX1</accession>
<accession>B3KQ77</accession>
<accession>Q96DY0</accession>
<accession>Q9NVY7</accession>
<sequence length="349" mass="38697">MKGLYFQQSSTDEEITFVFQEKEDLPVTEDNFVKLQVKACALSQINTKLLAEMKMKKDLFPVGREIAGIVLDVGSKVSFFQPDDEVVGILPLDSEDPGLCEVVRVHEHYLVHKPEKVTWTEAAGSIRDGVRAYTALHYLSHLSPGKSVLIMDGASAFGTIAIQLAHHRGAKVISTACSLEDKQCLERFRPPIARVIDVSNGKVHVAESCLEETGGLGVDIVLDAGVRLYSKDDEPAVKLQLLPHKHDIITLLGVGGHWVTTEENLQLDPPDSHCLFLKGATLAFLNDEVWNLSNVQQGKYLCILKDVMEKLSTGVFRPQLDEPIPLYEAKVSMEAVQKNQGRKKQVVQF</sequence>
<dbReference type="EC" id="1.-.-.-"/>
<dbReference type="EMBL" id="AF098798">
    <property type="protein sequence ID" value="AAD20219.1"/>
    <property type="molecule type" value="mRNA"/>
</dbReference>
<dbReference type="EMBL" id="AF029689">
    <property type="protein sequence ID" value="AAD22381.1"/>
    <property type="molecule type" value="mRNA"/>
</dbReference>
<dbReference type="EMBL" id="AK001293">
    <property type="protein sequence ID" value="BAA91605.1"/>
    <property type="status" value="ALT_FRAME"/>
    <property type="molecule type" value="mRNA"/>
</dbReference>
<dbReference type="EMBL" id="AK057604">
    <property type="protein sequence ID" value="BAG51939.1"/>
    <property type="molecule type" value="mRNA"/>
</dbReference>
<dbReference type="EMBL" id="AK315707">
    <property type="protein sequence ID" value="BAG38068.1"/>
    <property type="molecule type" value="mRNA"/>
</dbReference>
<dbReference type="EMBL" id="AP000304">
    <property type="status" value="NOT_ANNOTATED_CDS"/>
    <property type="molecule type" value="Genomic_DNA"/>
</dbReference>
<dbReference type="EMBL" id="AP000305">
    <property type="status" value="NOT_ANNOTATED_CDS"/>
    <property type="molecule type" value="Genomic_DNA"/>
</dbReference>
<dbReference type="EMBL" id="AP000306">
    <property type="status" value="NOT_ANNOTATED_CDS"/>
    <property type="molecule type" value="Genomic_DNA"/>
</dbReference>
<dbReference type="EMBL" id="AP000307">
    <property type="status" value="NOT_ANNOTATED_CDS"/>
    <property type="molecule type" value="Genomic_DNA"/>
</dbReference>
<dbReference type="EMBL" id="AP000308">
    <property type="status" value="NOT_ANNOTATED_CDS"/>
    <property type="molecule type" value="Genomic_DNA"/>
</dbReference>
<dbReference type="EMBL" id="BC013155">
    <property type="protein sequence ID" value="AAH13155.1"/>
    <property type="status" value="ALT_SEQ"/>
    <property type="molecule type" value="mRNA"/>
</dbReference>
<dbReference type="EMBL" id="BC033023">
    <property type="protein sequence ID" value="AAH33023.1"/>
    <property type="molecule type" value="mRNA"/>
</dbReference>
<dbReference type="CCDS" id="CCDS13633.2">
    <molecule id="O95825-1"/>
</dbReference>
<dbReference type="RefSeq" id="NP_665857.2">
    <molecule id="O95825-1"/>
    <property type="nucleotide sequence ID" value="NM_145858.3"/>
</dbReference>
<dbReference type="PDB" id="7ND2">
    <property type="method" value="EM"/>
    <property type="resolution" value="4.00 A"/>
    <property type="chains" value="C/D=2-349"/>
</dbReference>
<dbReference type="PDB" id="8A3O">
    <property type="method" value="X-ray"/>
    <property type="resolution" value="2.90 A"/>
    <property type="chains" value="A/B=2-349"/>
</dbReference>
<dbReference type="PDBsum" id="7ND2"/>
<dbReference type="PDBsum" id="8A3O"/>
<dbReference type="EMDB" id="EMD-12273"/>
<dbReference type="SMR" id="O95825"/>
<dbReference type="BioGRID" id="115271">
    <property type="interactions" value="29"/>
</dbReference>
<dbReference type="ComplexPortal" id="CPX-2540">
    <property type="entry name" value="FERRY RAB5 effector complex"/>
</dbReference>
<dbReference type="DIP" id="DIP-62115N"/>
<dbReference type="FunCoup" id="O95825">
    <property type="interactions" value="1618"/>
</dbReference>
<dbReference type="IntAct" id="O95825">
    <property type="interactions" value="19"/>
</dbReference>
<dbReference type="STRING" id="9606.ENSP00000370966"/>
<dbReference type="iPTMnet" id="O95825"/>
<dbReference type="MetOSite" id="O95825"/>
<dbReference type="PhosphoSitePlus" id="O95825"/>
<dbReference type="BioMuta" id="CRYZL1"/>
<dbReference type="jPOST" id="O95825"/>
<dbReference type="MassIVE" id="O95825"/>
<dbReference type="PaxDb" id="9606-ENSP00000370966"/>
<dbReference type="PeptideAtlas" id="O95825"/>
<dbReference type="ProteomicsDB" id="3551"/>
<dbReference type="ProteomicsDB" id="51072">
    <molecule id="O95825-1"/>
</dbReference>
<dbReference type="Pumba" id="O95825"/>
<dbReference type="Antibodypedia" id="7498">
    <property type="antibodies" value="282 antibodies from 23 providers"/>
</dbReference>
<dbReference type="DNASU" id="9946"/>
<dbReference type="Ensembl" id="ENST00000381554.8">
    <molecule id="O95825-1"/>
    <property type="protein sequence ID" value="ENSP00000370966.3"/>
    <property type="gene ID" value="ENSG00000205758.12"/>
</dbReference>
<dbReference type="Ensembl" id="ENST00000420072.5">
    <molecule id="O95825-2"/>
    <property type="protein sequence ID" value="ENSP00000416315.1"/>
    <property type="gene ID" value="ENSG00000205758.12"/>
</dbReference>
<dbReference type="GeneID" id="9946"/>
<dbReference type="KEGG" id="hsa:9946"/>
<dbReference type="MANE-Select" id="ENST00000381554.8">
    <property type="protein sequence ID" value="ENSP00000370966.3"/>
    <property type="RefSeq nucleotide sequence ID" value="NM_145858.3"/>
    <property type="RefSeq protein sequence ID" value="NP_665857.2"/>
</dbReference>
<dbReference type="UCSC" id="uc002yss.2">
    <molecule id="O95825-1"/>
    <property type="organism name" value="human"/>
</dbReference>
<dbReference type="AGR" id="HGNC:2420"/>
<dbReference type="CTD" id="9946"/>
<dbReference type="DisGeNET" id="9946"/>
<dbReference type="GeneCards" id="CRYZL1"/>
<dbReference type="HGNC" id="HGNC:2420">
    <property type="gene designation" value="CRYZL1"/>
</dbReference>
<dbReference type="HPA" id="ENSG00000205758">
    <property type="expression patterns" value="Low tissue specificity"/>
</dbReference>
<dbReference type="MIM" id="603920">
    <property type="type" value="gene"/>
</dbReference>
<dbReference type="neXtProt" id="NX_O95825"/>
<dbReference type="OpenTargets" id="ENSG00000205758"/>
<dbReference type="PharmGKB" id="PA26926"/>
<dbReference type="VEuPathDB" id="HostDB:ENSG00000205758"/>
<dbReference type="eggNOG" id="KOG1198">
    <property type="taxonomic scope" value="Eukaryota"/>
</dbReference>
<dbReference type="GeneTree" id="ENSGT00390000013113"/>
<dbReference type="InParanoid" id="O95825"/>
<dbReference type="OMA" id="AHHWGAK"/>
<dbReference type="OrthoDB" id="9930022at2759"/>
<dbReference type="PAN-GO" id="O95825">
    <property type="GO annotations" value="0 GO annotations based on evolutionary models"/>
</dbReference>
<dbReference type="PhylomeDB" id="O95825"/>
<dbReference type="TreeFam" id="TF328922"/>
<dbReference type="PathwayCommons" id="O95825"/>
<dbReference type="SignaLink" id="O95825"/>
<dbReference type="BioGRID-ORCS" id="9946">
    <property type="hits" value="20 hits in 1158 CRISPR screens"/>
</dbReference>
<dbReference type="ChiTaRS" id="CRYZL1">
    <property type="organism name" value="human"/>
</dbReference>
<dbReference type="GeneWiki" id="CRYZL1"/>
<dbReference type="GenomeRNAi" id="9946"/>
<dbReference type="Pharos" id="O95825">
    <property type="development level" value="Tbio"/>
</dbReference>
<dbReference type="PRO" id="PR:O95825"/>
<dbReference type="Proteomes" id="UP000005640">
    <property type="component" value="Chromosome 21"/>
</dbReference>
<dbReference type="RNAct" id="O95825">
    <property type="molecule type" value="protein"/>
</dbReference>
<dbReference type="Bgee" id="ENSG00000205758">
    <property type="expression patterns" value="Expressed in cortical plate and 203 other cell types or tissues"/>
</dbReference>
<dbReference type="ExpressionAtlas" id="O95825">
    <property type="expression patterns" value="baseline and differential"/>
</dbReference>
<dbReference type="GO" id="GO:0005829">
    <property type="term" value="C:cytosol"/>
    <property type="evidence" value="ECO:0007005"/>
    <property type="project" value="UniProtKB"/>
</dbReference>
<dbReference type="GO" id="GO:0005769">
    <property type="term" value="C:early endosome"/>
    <property type="evidence" value="ECO:0000314"/>
    <property type="project" value="UniProtKB"/>
</dbReference>
<dbReference type="GO" id="GO:0042802">
    <property type="term" value="F:identical protein binding"/>
    <property type="evidence" value="ECO:0000314"/>
    <property type="project" value="UniProtKB"/>
</dbReference>
<dbReference type="GO" id="GO:0050661">
    <property type="term" value="F:NADP binding"/>
    <property type="evidence" value="ECO:0000303"/>
    <property type="project" value="UniProtKB"/>
</dbReference>
<dbReference type="GO" id="GO:0003960">
    <property type="term" value="F:NADPH:quinone reductase activity"/>
    <property type="evidence" value="ECO:0000303"/>
    <property type="project" value="UniProtKB"/>
</dbReference>
<dbReference type="GO" id="GO:1901661">
    <property type="term" value="P:quinone metabolic process"/>
    <property type="evidence" value="ECO:0000303"/>
    <property type="project" value="UniProtKB"/>
</dbReference>
<dbReference type="CDD" id="cd05195">
    <property type="entry name" value="enoyl_red"/>
    <property type="match status" value="1"/>
</dbReference>
<dbReference type="FunFam" id="3.90.180.10:FF:000060">
    <property type="entry name" value="Crystallin zeta like 1"/>
    <property type="match status" value="1"/>
</dbReference>
<dbReference type="Gene3D" id="3.90.180.10">
    <property type="entry name" value="Medium-chain alcohol dehydrogenases, catalytic domain"/>
    <property type="match status" value="1"/>
</dbReference>
<dbReference type="InterPro" id="IPR013154">
    <property type="entry name" value="ADH-like_N"/>
</dbReference>
<dbReference type="InterPro" id="IPR042633">
    <property type="entry name" value="CRYZL1"/>
</dbReference>
<dbReference type="InterPro" id="IPR011032">
    <property type="entry name" value="GroES-like_sf"/>
</dbReference>
<dbReference type="InterPro" id="IPR036291">
    <property type="entry name" value="NAD(P)-bd_dom_sf"/>
</dbReference>
<dbReference type="InterPro" id="IPR020843">
    <property type="entry name" value="PKS_ER"/>
</dbReference>
<dbReference type="PANTHER" id="PTHR44461">
    <property type="entry name" value="QUINONE OXIDOREDUCTASE-LIKE PROTEIN 1"/>
    <property type="match status" value="1"/>
</dbReference>
<dbReference type="PANTHER" id="PTHR44461:SF1">
    <property type="entry name" value="QUINONE OXIDOREDUCTASE-LIKE PROTEIN 1"/>
    <property type="match status" value="1"/>
</dbReference>
<dbReference type="Pfam" id="PF08240">
    <property type="entry name" value="ADH_N"/>
    <property type="match status" value="1"/>
</dbReference>
<dbReference type="SMART" id="SM00829">
    <property type="entry name" value="PKS_ER"/>
    <property type="match status" value="1"/>
</dbReference>
<dbReference type="SUPFAM" id="SSF50129">
    <property type="entry name" value="GroES-like"/>
    <property type="match status" value="1"/>
</dbReference>
<dbReference type="SUPFAM" id="SSF51735">
    <property type="entry name" value="NAD(P)-binding Rossmann-fold domains"/>
    <property type="match status" value="1"/>
</dbReference>
<name>QORL1_HUMAN</name>
<organism>
    <name type="scientific">Homo sapiens</name>
    <name type="common">Human</name>
    <dbReference type="NCBI Taxonomy" id="9606"/>
    <lineage>
        <taxon>Eukaryota</taxon>
        <taxon>Metazoa</taxon>
        <taxon>Chordata</taxon>
        <taxon>Craniata</taxon>
        <taxon>Vertebrata</taxon>
        <taxon>Euteleostomi</taxon>
        <taxon>Mammalia</taxon>
        <taxon>Eutheria</taxon>
        <taxon>Euarchontoglires</taxon>
        <taxon>Primates</taxon>
        <taxon>Haplorrhini</taxon>
        <taxon>Catarrhini</taxon>
        <taxon>Hominidae</taxon>
        <taxon>Homo</taxon>
    </lineage>
</organism>
<proteinExistence type="evidence at protein level"/>
<keyword id="KW-0002">3D-structure</keyword>
<keyword id="KW-0025">Alternative splicing</keyword>
<keyword id="KW-0967">Endosome</keyword>
<keyword id="KW-0521">NADP</keyword>
<keyword id="KW-0560">Oxidoreductase</keyword>
<keyword id="KW-1267">Proteomics identification</keyword>
<keyword id="KW-1185">Reference proteome</keyword>
<gene>
    <name type="primary">CRYZL1</name>
    <name type="synonym">4P11</name>
    <name evidence="4" type="synonym">FERRY4</name>
</gene>
<feature type="chain" id="PRO_0000160913" description="Quinone oxidoreductase-like protein 1">
    <location>
        <begin position="1"/>
        <end position="349"/>
    </location>
</feature>
<feature type="splice variant" id="VSP_055792" description="In isoform 2." evidence="3">
    <original>ARVIDV</original>
    <variation>ENSTIA</variation>
    <location>
        <begin position="193"/>
        <end position="198"/>
    </location>
</feature>
<feature type="splice variant" id="VSP_055793" description="In isoform 2." evidence="3">
    <location>
        <begin position="199"/>
        <end position="349"/>
    </location>
</feature>
<feature type="sequence variant" id="VAR_027835" description="In dbSNP:rs13050238.">
    <original>A</original>
    <variation>T</variation>
    <location>
        <position position="39"/>
    </location>
</feature>
<feature type="sequence conflict" description="In Ref. 3; BAA91605." evidence="5" ref="3">
    <original>S</original>
    <variation>P</variation>
    <location>
        <position position="78"/>
    </location>
</feature>
<feature type="sequence conflict" description="In Ref. 3; BAA91605." evidence="5" ref="3">
    <original>I</original>
    <variation>T</variation>
    <location>
        <position position="89"/>
    </location>
</feature>
<feature type="sequence conflict" description="In Ref. 1; AAD20219, 2; AAD22381 and 4; AAH13155." evidence="5" ref="1 2 4">
    <original>F</original>
    <variation>L</variation>
    <location>
        <position position="276"/>
    </location>
</feature>
<feature type="sequence conflict" description="In Ref. 3; BAA91605." evidence="5" ref="3">
    <original>K</original>
    <variation>E</variation>
    <location>
        <position position="299"/>
    </location>
</feature>
<feature type="strand" evidence="8">
    <location>
        <begin position="2"/>
        <end position="8"/>
    </location>
</feature>
<feature type="strand" evidence="8">
    <location>
        <begin position="15"/>
        <end position="23"/>
    </location>
</feature>
<feature type="strand" evidence="8">
    <location>
        <begin position="29"/>
        <end position="41"/>
    </location>
</feature>
<feature type="helix" evidence="8">
    <location>
        <begin position="47"/>
        <end position="52"/>
    </location>
</feature>
<feature type="strand" evidence="8">
    <location>
        <begin position="58"/>
        <end position="61"/>
    </location>
</feature>
<feature type="strand" evidence="8">
    <location>
        <begin position="65"/>
        <end position="73"/>
    </location>
</feature>
<feature type="strand" evidence="8">
    <location>
        <begin position="85"/>
        <end position="89"/>
    </location>
</feature>
<feature type="strand" evidence="8">
    <location>
        <begin position="98"/>
        <end position="106"/>
    </location>
</feature>
<feature type="helix" evidence="8">
    <location>
        <begin position="107"/>
        <end position="109"/>
    </location>
</feature>
<feature type="strand" evidence="8">
    <location>
        <begin position="110"/>
        <end position="112"/>
    </location>
</feature>
<feature type="helix" evidence="8">
    <location>
        <begin position="119"/>
        <end position="137"/>
    </location>
</feature>
<feature type="strand" evidence="8">
    <location>
        <begin position="147"/>
        <end position="151"/>
    </location>
</feature>
<feature type="helix" evidence="8">
    <location>
        <begin position="156"/>
        <end position="167"/>
    </location>
</feature>
<feature type="strand" evidence="8">
    <location>
        <begin position="171"/>
        <end position="176"/>
    </location>
</feature>
<feature type="helix" evidence="8">
    <location>
        <begin position="179"/>
        <end position="186"/>
    </location>
</feature>
<feature type="strand" evidence="8">
    <location>
        <begin position="193"/>
        <end position="197"/>
    </location>
</feature>
<feature type="helix" evidence="8">
    <location>
        <begin position="205"/>
        <end position="213"/>
    </location>
</feature>
<feature type="strand" evidence="8">
    <location>
        <begin position="218"/>
        <end position="223"/>
    </location>
</feature>
<feature type="helix" evidence="8">
    <location>
        <begin position="245"/>
        <end position="251"/>
    </location>
</feature>
<feature type="strand" evidence="8">
    <location>
        <begin position="252"/>
        <end position="260"/>
    </location>
</feature>
<feature type="helix" evidence="8">
    <location>
        <begin position="269"/>
        <end position="277"/>
    </location>
</feature>
<feature type="strand" evidence="8">
    <location>
        <begin position="281"/>
        <end position="284"/>
    </location>
</feature>
<feature type="helix" evidence="8">
    <location>
        <begin position="289"/>
        <end position="293"/>
    </location>
</feature>
<feature type="helix" evidence="8">
    <location>
        <begin position="297"/>
        <end position="313"/>
    </location>
</feature>
<feature type="helix" evidence="8">
    <location>
        <begin position="326"/>
        <end position="328"/>
    </location>
</feature>
<feature type="helix" evidence="8">
    <location>
        <begin position="329"/>
        <end position="337"/>
    </location>
</feature>
<feature type="strand" evidence="8">
    <location>
        <begin position="342"/>
        <end position="344"/>
    </location>
</feature>
<feature type="strand" evidence="8">
    <location>
        <begin position="346"/>
        <end position="348"/>
    </location>
</feature>